<keyword id="KW-0002">3D-structure</keyword>
<keyword id="KW-1043">Host membrane</keyword>
<keyword id="KW-0945">Host-virus interaction</keyword>
<keyword id="KW-1081">Inhibition of host apoptosis by viral BCL2-like protein</keyword>
<keyword id="KW-0472">Membrane</keyword>
<keyword id="KW-1119">Modulation of host cell apoptosis by virus</keyword>
<keyword id="KW-1185">Reference proteome</keyword>
<keyword id="KW-0812">Transmembrane</keyword>
<keyword id="KW-1133">Transmembrane helix</keyword>
<organism>
    <name type="scientific">Canarypox virus</name>
    <name type="common">CNPV</name>
    <dbReference type="NCBI Taxonomy" id="44088"/>
    <lineage>
        <taxon>Viruses</taxon>
        <taxon>Varidnaviria</taxon>
        <taxon>Bamfordvirae</taxon>
        <taxon>Nucleocytoviricota</taxon>
        <taxon>Pokkesviricetes</taxon>
        <taxon>Chitovirales</taxon>
        <taxon>Poxviridae</taxon>
        <taxon>Chordopoxvirinae</taxon>
        <taxon>Avipoxvirus</taxon>
    </lineage>
</organism>
<protein>
    <recommendedName>
        <fullName>Apoptosis regulator Bcl-2 homolog</fullName>
        <shortName>vBcl-2</shortName>
    </recommendedName>
</protein>
<name>ARBH_CNPV</name>
<dbReference type="EMBL" id="AY318871">
    <property type="protein sequence ID" value="AAR83404.1"/>
    <property type="molecule type" value="Genomic_DNA"/>
</dbReference>
<dbReference type="RefSeq" id="NP_955081.1">
    <property type="nucleotide sequence ID" value="NC_005309.1"/>
</dbReference>
<dbReference type="PDB" id="5WOS">
    <property type="method" value="X-ray"/>
    <property type="resolution" value="2.45 A"/>
    <property type="chains" value="A=1-143"/>
</dbReference>
<dbReference type="PDBsum" id="5WOS"/>
<dbReference type="SMR" id="Q6VZT9"/>
<dbReference type="GeneID" id="2700183"/>
<dbReference type="KEGG" id="vg:2700183"/>
<dbReference type="OrthoDB" id="36893at10239"/>
<dbReference type="Proteomes" id="UP000168164">
    <property type="component" value="Genome"/>
</dbReference>
<dbReference type="GO" id="GO:0033644">
    <property type="term" value="C:host cell membrane"/>
    <property type="evidence" value="ECO:0007669"/>
    <property type="project" value="UniProtKB-SubCell"/>
</dbReference>
<dbReference type="GO" id="GO:0016020">
    <property type="term" value="C:membrane"/>
    <property type="evidence" value="ECO:0007669"/>
    <property type="project" value="UniProtKB-KW"/>
</dbReference>
<dbReference type="GO" id="GO:0042981">
    <property type="term" value="P:regulation of apoptotic process"/>
    <property type="evidence" value="ECO:0007669"/>
    <property type="project" value="InterPro"/>
</dbReference>
<dbReference type="GO" id="GO:0033668">
    <property type="term" value="P:symbiont-mediated suppression of host apoptosis"/>
    <property type="evidence" value="ECO:0007669"/>
    <property type="project" value="UniProtKB-KW"/>
</dbReference>
<dbReference type="Gene3D" id="1.10.437.10">
    <property type="entry name" value="Blc2-like"/>
    <property type="match status" value="1"/>
</dbReference>
<dbReference type="InterPro" id="IPR036834">
    <property type="entry name" value="Bcl-2-like_sf"/>
</dbReference>
<dbReference type="InterPro" id="IPR046371">
    <property type="entry name" value="Bcl-2_BH1-3"/>
</dbReference>
<dbReference type="InterPro" id="IPR002475">
    <property type="entry name" value="Bcl2-like"/>
</dbReference>
<dbReference type="Pfam" id="PF00452">
    <property type="entry name" value="Bcl-2"/>
    <property type="match status" value="1"/>
</dbReference>
<dbReference type="SUPFAM" id="SSF56854">
    <property type="entry name" value="Bcl-2 inhibitors of programmed cell death"/>
    <property type="match status" value="1"/>
</dbReference>
<dbReference type="PROSITE" id="PS50062">
    <property type="entry name" value="BCL2_FAMILY"/>
    <property type="match status" value="1"/>
</dbReference>
<reference key="1">
    <citation type="journal article" date="2004" name="J. Virol.">
        <title>The genome of canarypox virus.</title>
        <authorList>
            <person name="Tulman E.R."/>
            <person name="Afonso C.L."/>
            <person name="Lu Z."/>
            <person name="Zsak L."/>
            <person name="Kutish G.F."/>
            <person name="Rock D.L."/>
        </authorList>
    </citation>
    <scope>NUCLEOTIDE SEQUENCE [LARGE SCALE GENOMIC DNA]</scope>
</reference>
<reference key="2">
    <citation type="journal article" date="2017" name="Viruses">
        <title>Structural and functional insight into canarypox virus CNP058 mediated regulation of apoptosis.</title>
        <authorList>
            <person name="Anasir M.I."/>
            <person name="Baxter A.A."/>
            <person name="Poon I.K.H."/>
            <person name="Hulett M.D."/>
            <person name="Kvansakul M."/>
        </authorList>
    </citation>
    <scope>FUNCTION</scope>
    <scope>INTERACTION WITH HOST BAK1 AND BAX</scope>
</reference>
<gene>
    <name type="primary">CNPV058</name>
</gene>
<sequence>MDPSVKKDEIYYTILNIIQNYFIEYCTGKNRNFHVEDENTYIIVKNMCDIILRDNIVEFRKDIDRCSDIENEIPEIVYDTIHDKITWGRVISIIAFGAYVTKVFKEKGRDNVVDLMPDIITESLLSRCRSWLSDQNCWDGLKAYVYNNKKFYYVTRYFRVAAFIITSLAVINLFL</sequence>
<accession>Q6VZT9</accession>
<feature type="chain" id="PRO_0000443228" description="Apoptosis regulator Bcl-2 homolog">
    <location>
        <begin position="1"/>
        <end position="175"/>
    </location>
</feature>
<feature type="transmembrane region" description="Helical" evidence="1">
    <location>
        <begin position="152"/>
        <end position="174"/>
    </location>
</feature>
<feature type="helix" evidence="3">
    <location>
        <begin position="9"/>
        <end position="27"/>
    </location>
</feature>
<feature type="turn" evidence="3">
    <location>
        <begin position="32"/>
        <end position="34"/>
    </location>
</feature>
<feature type="helix" evidence="3">
    <location>
        <begin position="38"/>
        <end position="64"/>
    </location>
</feature>
<feature type="helix" evidence="3">
    <location>
        <begin position="70"/>
        <end position="72"/>
    </location>
</feature>
<feature type="helix" evidence="3">
    <location>
        <begin position="73"/>
        <end position="81"/>
    </location>
</feature>
<feature type="helix" evidence="3">
    <location>
        <begin position="87"/>
        <end position="107"/>
    </location>
</feature>
<feature type="turn" evidence="3">
    <location>
        <begin position="110"/>
        <end position="115"/>
    </location>
</feature>
<feature type="helix" evidence="3">
    <location>
        <begin position="116"/>
        <end position="133"/>
    </location>
</feature>
<feature type="turn" evidence="3">
    <location>
        <begin position="134"/>
        <end position="136"/>
    </location>
</feature>
<feature type="helix" evidence="3">
    <location>
        <begin position="137"/>
        <end position="141"/>
    </location>
</feature>
<evidence type="ECO:0000255" key="1"/>
<evidence type="ECO:0000269" key="2">
    <source>
    </source>
</evidence>
<evidence type="ECO:0007829" key="3">
    <source>
        <dbReference type="PDB" id="5WOS"/>
    </source>
</evidence>
<proteinExistence type="evidence at protein level"/>
<organismHost>
    <name type="scientific">Serinus</name>
    <dbReference type="NCBI Taxonomy" id="9134"/>
</organismHost>
<comment type="function">
    <text evidence="2">Plays a role in the inhibition of host apoptosis. Interacts with host proapoptotic factors BAK1 and BAX to supposedly prevent their activation.</text>
</comment>
<comment type="subunit">
    <text evidence="2">Interacts with host BAK1 and BAX as well as other BH3-containing proteins including BIM, BID or PUMA.</text>
</comment>
<comment type="subcellular location">
    <subcellularLocation>
        <location evidence="1">Host membrane</location>
        <topology evidence="1">Single-pass membrane protein</topology>
    </subcellularLocation>
</comment>